<proteinExistence type="inferred from homology"/>
<reference key="1">
    <citation type="journal article" date="2007" name="Nat. Biotechnol.">
        <title>Complete genome sequence of the myxobacterium Sorangium cellulosum.</title>
        <authorList>
            <person name="Schneiker S."/>
            <person name="Perlova O."/>
            <person name="Kaiser O."/>
            <person name="Gerth K."/>
            <person name="Alici A."/>
            <person name="Altmeyer M.O."/>
            <person name="Bartels D."/>
            <person name="Bekel T."/>
            <person name="Beyer S."/>
            <person name="Bode E."/>
            <person name="Bode H.B."/>
            <person name="Bolten C.J."/>
            <person name="Choudhuri J.V."/>
            <person name="Doss S."/>
            <person name="Elnakady Y.A."/>
            <person name="Frank B."/>
            <person name="Gaigalat L."/>
            <person name="Goesmann A."/>
            <person name="Groeger C."/>
            <person name="Gross F."/>
            <person name="Jelsbak L."/>
            <person name="Jelsbak L."/>
            <person name="Kalinowski J."/>
            <person name="Kegler C."/>
            <person name="Knauber T."/>
            <person name="Konietzny S."/>
            <person name="Kopp M."/>
            <person name="Krause L."/>
            <person name="Krug D."/>
            <person name="Linke B."/>
            <person name="Mahmud T."/>
            <person name="Martinez-Arias R."/>
            <person name="McHardy A.C."/>
            <person name="Merai M."/>
            <person name="Meyer F."/>
            <person name="Mormann S."/>
            <person name="Munoz-Dorado J."/>
            <person name="Perez J."/>
            <person name="Pradella S."/>
            <person name="Rachid S."/>
            <person name="Raddatz G."/>
            <person name="Rosenau F."/>
            <person name="Rueckert C."/>
            <person name="Sasse F."/>
            <person name="Scharfe M."/>
            <person name="Schuster S.C."/>
            <person name="Suen G."/>
            <person name="Treuner-Lange A."/>
            <person name="Velicer G.J."/>
            <person name="Vorholter F.-J."/>
            <person name="Weissman K.J."/>
            <person name="Welch R.D."/>
            <person name="Wenzel S.C."/>
            <person name="Whitworth D.E."/>
            <person name="Wilhelm S."/>
            <person name="Wittmann C."/>
            <person name="Bloecker H."/>
            <person name="Puehler A."/>
            <person name="Mueller R."/>
        </authorList>
    </citation>
    <scope>NUCLEOTIDE SEQUENCE [LARGE SCALE GENOMIC DNA]</scope>
    <source>
        <strain>So ce56</strain>
    </source>
</reference>
<name>KDPC_SORC5</name>
<sequence length="190" mass="19815">MLAHLRPALVLLLVLTGLTGFAYPLLSTAIAQAAFPHQAHGSLVRKDGRVVGSTLLGQPFDDPRYFWGRPSATSPVPYAGQASAGSNLGPTNPALAEAVKARVDALRAADPEGAAPVPVDLVTASGSGLDPHISPAGAEHQVRRVARARGLSEAEVRRFVARHTEGRLLGLLGEPHVNVLLLNLALDGAR</sequence>
<keyword id="KW-0067">ATP-binding</keyword>
<keyword id="KW-0997">Cell inner membrane</keyword>
<keyword id="KW-1003">Cell membrane</keyword>
<keyword id="KW-0406">Ion transport</keyword>
<keyword id="KW-0472">Membrane</keyword>
<keyword id="KW-0547">Nucleotide-binding</keyword>
<keyword id="KW-0630">Potassium</keyword>
<keyword id="KW-0633">Potassium transport</keyword>
<keyword id="KW-1185">Reference proteome</keyword>
<keyword id="KW-0812">Transmembrane</keyword>
<keyword id="KW-1133">Transmembrane helix</keyword>
<keyword id="KW-0813">Transport</keyword>
<organism>
    <name type="scientific">Sorangium cellulosum (strain So ce56)</name>
    <name type="common">Polyangium cellulosum (strain So ce56)</name>
    <dbReference type="NCBI Taxonomy" id="448385"/>
    <lineage>
        <taxon>Bacteria</taxon>
        <taxon>Pseudomonadati</taxon>
        <taxon>Myxococcota</taxon>
        <taxon>Polyangia</taxon>
        <taxon>Polyangiales</taxon>
        <taxon>Polyangiaceae</taxon>
        <taxon>Sorangium</taxon>
    </lineage>
</organism>
<accession>A9F781</accession>
<dbReference type="EMBL" id="AM746676">
    <property type="protein sequence ID" value="CAN91512.1"/>
    <property type="molecule type" value="Genomic_DNA"/>
</dbReference>
<dbReference type="RefSeq" id="WP_012233989.1">
    <property type="nucleotide sequence ID" value="NC_010162.1"/>
</dbReference>
<dbReference type="SMR" id="A9F781"/>
<dbReference type="STRING" id="448385.sce1354"/>
<dbReference type="KEGG" id="scl:sce1354"/>
<dbReference type="eggNOG" id="COG2156">
    <property type="taxonomic scope" value="Bacteria"/>
</dbReference>
<dbReference type="HOGENOM" id="CLU_077094_2_0_7"/>
<dbReference type="OrthoDB" id="9788285at2"/>
<dbReference type="BioCyc" id="SCEL448385:SCE_RS07010-MONOMER"/>
<dbReference type="Proteomes" id="UP000002139">
    <property type="component" value="Chromosome"/>
</dbReference>
<dbReference type="GO" id="GO:0005886">
    <property type="term" value="C:plasma membrane"/>
    <property type="evidence" value="ECO:0007669"/>
    <property type="project" value="UniProtKB-SubCell"/>
</dbReference>
<dbReference type="GO" id="GO:0005524">
    <property type="term" value="F:ATP binding"/>
    <property type="evidence" value="ECO:0007669"/>
    <property type="project" value="UniProtKB-UniRule"/>
</dbReference>
<dbReference type="GO" id="GO:0008556">
    <property type="term" value="F:P-type potassium transmembrane transporter activity"/>
    <property type="evidence" value="ECO:0007669"/>
    <property type="project" value="InterPro"/>
</dbReference>
<dbReference type="HAMAP" id="MF_00276">
    <property type="entry name" value="KdpC"/>
    <property type="match status" value="1"/>
</dbReference>
<dbReference type="InterPro" id="IPR003820">
    <property type="entry name" value="KdpC"/>
</dbReference>
<dbReference type="NCBIfam" id="TIGR00681">
    <property type="entry name" value="kdpC"/>
    <property type="match status" value="1"/>
</dbReference>
<dbReference type="NCBIfam" id="NF001454">
    <property type="entry name" value="PRK00315.1"/>
    <property type="match status" value="1"/>
</dbReference>
<dbReference type="PANTHER" id="PTHR30042">
    <property type="entry name" value="POTASSIUM-TRANSPORTING ATPASE C CHAIN"/>
    <property type="match status" value="1"/>
</dbReference>
<dbReference type="PANTHER" id="PTHR30042:SF2">
    <property type="entry name" value="POTASSIUM-TRANSPORTING ATPASE KDPC SUBUNIT"/>
    <property type="match status" value="1"/>
</dbReference>
<dbReference type="Pfam" id="PF02669">
    <property type="entry name" value="KdpC"/>
    <property type="match status" value="1"/>
</dbReference>
<dbReference type="PIRSF" id="PIRSF001296">
    <property type="entry name" value="K_ATPase_KdpC"/>
    <property type="match status" value="1"/>
</dbReference>
<gene>
    <name evidence="1" type="primary">kdpC</name>
    <name type="ordered locus">sce1354</name>
</gene>
<evidence type="ECO:0000255" key="1">
    <source>
        <dbReference type="HAMAP-Rule" id="MF_00276"/>
    </source>
</evidence>
<comment type="function">
    <text evidence="1">Part of the high-affinity ATP-driven potassium transport (or Kdp) system, which catalyzes the hydrolysis of ATP coupled with the electrogenic transport of potassium into the cytoplasm. This subunit acts as a catalytic chaperone that increases the ATP-binding affinity of the ATP-hydrolyzing subunit KdpB by the formation of a transient KdpB/KdpC/ATP ternary complex.</text>
</comment>
<comment type="subunit">
    <text evidence="1">The system is composed of three essential subunits: KdpA, KdpB and KdpC.</text>
</comment>
<comment type="subcellular location">
    <subcellularLocation>
        <location evidence="1">Cell inner membrane</location>
        <topology evidence="1">Single-pass membrane protein</topology>
    </subcellularLocation>
</comment>
<comment type="similarity">
    <text evidence="1">Belongs to the KdpC family.</text>
</comment>
<feature type="chain" id="PRO_1000078802" description="Potassium-transporting ATPase KdpC subunit">
    <location>
        <begin position="1"/>
        <end position="190"/>
    </location>
</feature>
<feature type="transmembrane region" description="Helical" evidence="1">
    <location>
        <begin position="10"/>
        <end position="30"/>
    </location>
</feature>
<protein>
    <recommendedName>
        <fullName evidence="1">Potassium-transporting ATPase KdpC subunit</fullName>
    </recommendedName>
    <alternativeName>
        <fullName evidence="1">ATP phosphohydrolase [potassium-transporting] C chain</fullName>
    </alternativeName>
    <alternativeName>
        <fullName evidence="1">Potassium-binding and translocating subunit C</fullName>
    </alternativeName>
    <alternativeName>
        <fullName evidence="1">Potassium-translocating ATPase C chain</fullName>
    </alternativeName>
</protein>